<sequence length="120" mass="13848">MFLLYEYDLFWAFLIISSLIPILAFFISGVLAPISKGPEKLSTYESGIEPMGDAWLQFRIRYYMFALVFVVFDVETVFLYPWAMSFDVLGVSVFIEAFIFVLILIGGLVYAWRKGALEWS</sequence>
<accession>A7Y3E3</accession>
<dbReference type="EC" id="7.1.1.-" evidence="1"/>
<dbReference type="EMBL" id="EU118126">
    <property type="protein sequence ID" value="ABV02353.1"/>
    <property type="molecule type" value="Genomic_DNA"/>
</dbReference>
<dbReference type="RefSeq" id="YP_001468313.1">
    <property type="nucleotide sequence ID" value="NC_009808.1"/>
</dbReference>
<dbReference type="SMR" id="A7Y3E3"/>
<dbReference type="GeneID" id="5601250"/>
<dbReference type="GO" id="GO:0009535">
    <property type="term" value="C:chloroplast thylakoid membrane"/>
    <property type="evidence" value="ECO:0007669"/>
    <property type="project" value="UniProtKB-SubCell"/>
</dbReference>
<dbReference type="GO" id="GO:0030964">
    <property type="term" value="C:NADH dehydrogenase complex"/>
    <property type="evidence" value="ECO:0007669"/>
    <property type="project" value="TreeGrafter"/>
</dbReference>
<dbReference type="GO" id="GO:0008137">
    <property type="term" value="F:NADH dehydrogenase (ubiquinone) activity"/>
    <property type="evidence" value="ECO:0007669"/>
    <property type="project" value="InterPro"/>
</dbReference>
<dbReference type="GO" id="GO:0048038">
    <property type="term" value="F:quinone binding"/>
    <property type="evidence" value="ECO:0007669"/>
    <property type="project" value="UniProtKB-KW"/>
</dbReference>
<dbReference type="GO" id="GO:0019684">
    <property type="term" value="P:photosynthesis, light reaction"/>
    <property type="evidence" value="ECO:0007669"/>
    <property type="project" value="UniProtKB-UniRule"/>
</dbReference>
<dbReference type="FunFam" id="1.20.58.1610:FF:000001">
    <property type="entry name" value="NAD(P)H-quinone oxidoreductase subunit 3, chloroplastic"/>
    <property type="match status" value="1"/>
</dbReference>
<dbReference type="Gene3D" id="1.20.58.1610">
    <property type="entry name" value="NADH:ubiquinone/plastoquinone oxidoreductase, chain 3"/>
    <property type="match status" value="1"/>
</dbReference>
<dbReference type="HAMAP" id="MF_01394">
    <property type="entry name" value="NDH1_NuoA"/>
    <property type="match status" value="1"/>
</dbReference>
<dbReference type="InterPro" id="IPR023043">
    <property type="entry name" value="NAD(P)H_OxRDtase_bac/plastid"/>
</dbReference>
<dbReference type="InterPro" id="IPR000440">
    <property type="entry name" value="NADH_UbQ/plastoQ_OxRdtase_su3"/>
</dbReference>
<dbReference type="InterPro" id="IPR038430">
    <property type="entry name" value="NDAH_ubi_oxred_su3_sf"/>
</dbReference>
<dbReference type="PANTHER" id="PTHR11058">
    <property type="entry name" value="NADH-UBIQUINONE OXIDOREDUCTASE CHAIN 3"/>
    <property type="match status" value="1"/>
</dbReference>
<dbReference type="PANTHER" id="PTHR11058:SF9">
    <property type="entry name" value="NADH-UBIQUINONE OXIDOREDUCTASE CHAIN 3"/>
    <property type="match status" value="1"/>
</dbReference>
<dbReference type="Pfam" id="PF00507">
    <property type="entry name" value="Oxidored_q4"/>
    <property type="match status" value="1"/>
</dbReference>
<feature type="chain" id="PRO_0000362841" description="NAD(P)H-quinone oxidoreductase subunit 3, chloroplastic">
    <location>
        <begin position="1"/>
        <end position="120"/>
    </location>
</feature>
<feature type="transmembrane region" description="Helical" evidence="1">
    <location>
        <begin position="10"/>
        <end position="30"/>
    </location>
</feature>
<feature type="transmembrane region" description="Helical" evidence="1">
    <location>
        <begin position="64"/>
        <end position="84"/>
    </location>
</feature>
<feature type="transmembrane region" description="Helical" evidence="1">
    <location>
        <begin position="88"/>
        <end position="108"/>
    </location>
</feature>
<proteinExistence type="inferred from homology"/>
<organism>
    <name type="scientific">Ipomoea purpurea</name>
    <name type="common">Common morning glory</name>
    <name type="synonym">Pharbitis purpurea</name>
    <dbReference type="NCBI Taxonomy" id="4121"/>
    <lineage>
        <taxon>Eukaryota</taxon>
        <taxon>Viridiplantae</taxon>
        <taxon>Streptophyta</taxon>
        <taxon>Embryophyta</taxon>
        <taxon>Tracheophyta</taxon>
        <taxon>Spermatophyta</taxon>
        <taxon>Magnoliopsida</taxon>
        <taxon>eudicotyledons</taxon>
        <taxon>Gunneridae</taxon>
        <taxon>Pentapetalae</taxon>
        <taxon>asterids</taxon>
        <taxon>lamiids</taxon>
        <taxon>Solanales</taxon>
        <taxon>Convolvulaceae</taxon>
        <taxon>Ipomoeeae</taxon>
        <taxon>Ipomoea</taxon>
    </lineage>
</organism>
<reference key="1">
    <citation type="journal article" date="2007" name="BMC Plant Biol.">
        <title>Complete plastid genome sequences suggest strong selection for retention of photosynthetic genes in the parasitic plant genus Cuscuta.</title>
        <authorList>
            <person name="McNeal J.R."/>
            <person name="Kuehl J.V."/>
            <person name="Boore J.L."/>
            <person name="dePamphilis C.W."/>
        </authorList>
    </citation>
    <scope>NUCLEOTIDE SEQUENCE [LARGE SCALE GENOMIC DNA]</scope>
</reference>
<name>NU3C_IPOPU</name>
<keyword id="KW-0150">Chloroplast</keyword>
<keyword id="KW-0472">Membrane</keyword>
<keyword id="KW-0520">NAD</keyword>
<keyword id="KW-0521">NADP</keyword>
<keyword id="KW-0934">Plastid</keyword>
<keyword id="KW-0618">Plastoquinone</keyword>
<keyword id="KW-0874">Quinone</keyword>
<keyword id="KW-0793">Thylakoid</keyword>
<keyword id="KW-1278">Translocase</keyword>
<keyword id="KW-0812">Transmembrane</keyword>
<keyword id="KW-1133">Transmembrane helix</keyword>
<keyword id="KW-0813">Transport</keyword>
<gene>
    <name evidence="1" type="primary">ndhC</name>
</gene>
<geneLocation type="chloroplast"/>
<comment type="function">
    <text evidence="1">NDH shuttles electrons from NAD(P)H:plastoquinone, via FMN and iron-sulfur (Fe-S) centers, to quinones in the photosynthetic chain and possibly in a chloroplast respiratory chain. The immediate electron acceptor for the enzyme in this species is believed to be plastoquinone. Couples the redox reaction to proton translocation, and thus conserves the redox energy in a proton gradient.</text>
</comment>
<comment type="catalytic activity">
    <reaction evidence="1">
        <text>a plastoquinone + NADH + (n+1) H(+)(in) = a plastoquinol + NAD(+) + n H(+)(out)</text>
        <dbReference type="Rhea" id="RHEA:42608"/>
        <dbReference type="Rhea" id="RHEA-COMP:9561"/>
        <dbReference type="Rhea" id="RHEA-COMP:9562"/>
        <dbReference type="ChEBI" id="CHEBI:15378"/>
        <dbReference type="ChEBI" id="CHEBI:17757"/>
        <dbReference type="ChEBI" id="CHEBI:57540"/>
        <dbReference type="ChEBI" id="CHEBI:57945"/>
        <dbReference type="ChEBI" id="CHEBI:62192"/>
    </reaction>
</comment>
<comment type="catalytic activity">
    <reaction evidence="1">
        <text>a plastoquinone + NADPH + (n+1) H(+)(in) = a plastoquinol + NADP(+) + n H(+)(out)</text>
        <dbReference type="Rhea" id="RHEA:42612"/>
        <dbReference type="Rhea" id="RHEA-COMP:9561"/>
        <dbReference type="Rhea" id="RHEA-COMP:9562"/>
        <dbReference type="ChEBI" id="CHEBI:15378"/>
        <dbReference type="ChEBI" id="CHEBI:17757"/>
        <dbReference type="ChEBI" id="CHEBI:57783"/>
        <dbReference type="ChEBI" id="CHEBI:58349"/>
        <dbReference type="ChEBI" id="CHEBI:62192"/>
    </reaction>
</comment>
<comment type="subunit">
    <text evidence="1">NDH is composed of at least 16 different subunits, 5 of which are encoded in the nucleus.</text>
</comment>
<comment type="subcellular location">
    <subcellularLocation>
        <location evidence="1">Plastid</location>
        <location evidence="1">Chloroplast thylakoid membrane</location>
        <topology evidence="1">Multi-pass membrane protein</topology>
    </subcellularLocation>
</comment>
<comment type="similarity">
    <text evidence="1">Belongs to the complex I subunit 3 family.</text>
</comment>
<protein>
    <recommendedName>
        <fullName evidence="1">NAD(P)H-quinone oxidoreductase subunit 3, chloroplastic</fullName>
        <ecNumber evidence="1">7.1.1.-</ecNumber>
    </recommendedName>
    <alternativeName>
        <fullName evidence="1">NAD(P)H dehydrogenase subunit 3</fullName>
    </alternativeName>
    <alternativeName>
        <fullName evidence="1">NADH-plastoquinone oxidoreductase subunit 3</fullName>
    </alternativeName>
</protein>
<evidence type="ECO:0000255" key="1">
    <source>
        <dbReference type="HAMAP-Rule" id="MF_01394"/>
    </source>
</evidence>